<evidence type="ECO:0000255" key="1">
    <source>
        <dbReference type="HAMAP-Rule" id="MF_00313"/>
    </source>
</evidence>
<keyword id="KW-0378">Hydrolase</keyword>
<keyword id="KW-1185">Reference proteome</keyword>
<comment type="catalytic activity">
    <reaction evidence="1">
        <text>L-glutamine + H2O = L-glutamate + NH4(+)</text>
        <dbReference type="Rhea" id="RHEA:15889"/>
        <dbReference type="ChEBI" id="CHEBI:15377"/>
        <dbReference type="ChEBI" id="CHEBI:28938"/>
        <dbReference type="ChEBI" id="CHEBI:29985"/>
        <dbReference type="ChEBI" id="CHEBI:58359"/>
        <dbReference type="EC" id="3.5.1.2"/>
    </reaction>
</comment>
<comment type="subunit">
    <text evidence="1">Homotetramer.</text>
</comment>
<comment type="similarity">
    <text evidence="1">Belongs to the glutaminase family.</text>
</comment>
<gene>
    <name evidence="1" type="primary">glsA</name>
    <name type="ordered locus">Sbal_3036</name>
</gene>
<name>GLSA_SHEB5</name>
<feature type="chain" id="PRO_1000048356" description="Glutaminase">
    <location>
        <begin position="1"/>
        <end position="304"/>
    </location>
</feature>
<feature type="binding site" evidence="1">
    <location>
        <position position="63"/>
    </location>
    <ligand>
        <name>substrate</name>
    </ligand>
</feature>
<feature type="binding site" evidence="1">
    <location>
        <position position="114"/>
    </location>
    <ligand>
        <name>substrate</name>
    </ligand>
</feature>
<feature type="binding site" evidence="1">
    <location>
        <position position="158"/>
    </location>
    <ligand>
        <name>substrate</name>
    </ligand>
</feature>
<feature type="binding site" evidence="1">
    <location>
        <position position="165"/>
    </location>
    <ligand>
        <name>substrate</name>
    </ligand>
</feature>
<feature type="binding site" evidence="1">
    <location>
        <position position="189"/>
    </location>
    <ligand>
        <name>substrate</name>
    </ligand>
</feature>
<feature type="binding site" evidence="1">
    <location>
        <position position="240"/>
    </location>
    <ligand>
        <name>substrate</name>
    </ligand>
</feature>
<feature type="binding site" evidence="1">
    <location>
        <position position="258"/>
    </location>
    <ligand>
        <name>substrate</name>
    </ligand>
</feature>
<proteinExistence type="inferred from homology"/>
<reference key="1">
    <citation type="submission" date="2007-02" db="EMBL/GenBank/DDBJ databases">
        <title>Complete sequence of chromosome of Shewanella baltica OS155.</title>
        <authorList>
            <consortium name="US DOE Joint Genome Institute"/>
            <person name="Copeland A."/>
            <person name="Lucas S."/>
            <person name="Lapidus A."/>
            <person name="Barry K."/>
            <person name="Detter J.C."/>
            <person name="Glavina del Rio T."/>
            <person name="Hammon N."/>
            <person name="Israni S."/>
            <person name="Dalin E."/>
            <person name="Tice H."/>
            <person name="Pitluck S."/>
            <person name="Sims D.R."/>
            <person name="Brettin T."/>
            <person name="Bruce D."/>
            <person name="Han C."/>
            <person name="Tapia R."/>
            <person name="Brainard J."/>
            <person name="Schmutz J."/>
            <person name="Larimer F."/>
            <person name="Land M."/>
            <person name="Hauser L."/>
            <person name="Kyrpides N."/>
            <person name="Mikhailova N."/>
            <person name="Brettar I."/>
            <person name="Klappenbach J."/>
            <person name="Konstantinidis K."/>
            <person name="Rodrigues J."/>
            <person name="Tiedje J."/>
            <person name="Richardson P."/>
        </authorList>
    </citation>
    <scope>NUCLEOTIDE SEQUENCE [LARGE SCALE GENOMIC DNA]</scope>
    <source>
        <strain>OS155 / ATCC BAA-1091</strain>
    </source>
</reference>
<dbReference type="EC" id="3.5.1.2" evidence="1"/>
<dbReference type="EMBL" id="CP000563">
    <property type="protein sequence ID" value="ABN62518.1"/>
    <property type="molecule type" value="Genomic_DNA"/>
</dbReference>
<dbReference type="RefSeq" id="WP_011847375.1">
    <property type="nucleotide sequence ID" value="NC_009052.1"/>
</dbReference>
<dbReference type="SMR" id="A3D705"/>
<dbReference type="STRING" id="325240.Sbal_3036"/>
<dbReference type="KEGG" id="sbl:Sbal_3036"/>
<dbReference type="HOGENOM" id="CLU_027932_1_1_6"/>
<dbReference type="OrthoDB" id="9788822at2"/>
<dbReference type="Proteomes" id="UP000001557">
    <property type="component" value="Chromosome"/>
</dbReference>
<dbReference type="GO" id="GO:0004359">
    <property type="term" value="F:glutaminase activity"/>
    <property type="evidence" value="ECO:0007669"/>
    <property type="project" value="UniProtKB-UniRule"/>
</dbReference>
<dbReference type="GO" id="GO:0006537">
    <property type="term" value="P:glutamate biosynthetic process"/>
    <property type="evidence" value="ECO:0007669"/>
    <property type="project" value="TreeGrafter"/>
</dbReference>
<dbReference type="GO" id="GO:0006543">
    <property type="term" value="P:glutamine catabolic process"/>
    <property type="evidence" value="ECO:0007669"/>
    <property type="project" value="TreeGrafter"/>
</dbReference>
<dbReference type="FunFam" id="3.40.710.10:FF:000005">
    <property type="entry name" value="Glutaminase"/>
    <property type="match status" value="1"/>
</dbReference>
<dbReference type="Gene3D" id="3.40.710.10">
    <property type="entry name" value="DD-peptidase/beta-lactamase superfamily"/>
    <property type="match status" value="1"/>
</dbReference>
<dbReference type="HAMAP" id="MF_00313">
    <property type="entry name" value="Glutaminase"/>
    <property type="match status" value="1"/>
</dbReference>
<dbReference type="InterPro" id="IPR012338">
    <property type="entry name" value="Beta-lactam/transpept-like"/>
</dbReference>
<dbReference type="InterPro" id="IPR015868">
    <property type="entry name" value="Glutaminase"/>
</dbReference>
<dbReference type="NCBIfam" id="TIGR03814">
    <property type="entry name" value="Gln_ase"/>
    <property type="match status" value="1"/>
</dbReference>
<dbReference type="NCBIfam" id="NF002132">
    <property type="entry name" value="PRK00971.1-1"/>
    <property type="match status" value="1"/>
</dbReference>
<dbReference type="NCBIfam" id="NF002133">
    <property type="entry name" value="PRK00971.1-2"/>
    <property type="match status" value="1"/>
</dbReference>
<dbReference type="PANTHER" id="PTHR12544">
    <property type="entry name" value="GLUTAMINASE"/>
    <property type="match status" value="1"/>
</dbReference>
<dbReference type="PANTHER" id="PTHR12544:SF29">
    <property type="entry name" value="GLUTAMINASE"/>
    <property type="match status" value="1"/>
</dbReference>
<dbReference type="Pfam" id="PF04960">
    <property type="entry name" value="Glutaminase"/>
    <property type="match status" value="1"/>
</dbReference>
<dbReference type="SUPFAM" id="SSF56601">
    <property type="entry name" value="beta-lactamase/transpeptidase-like"/>
    <property type="match status" value="1"/>
</dbReference>
<sequence>MPELALLEEVVEKVRPLLGQGKVADYIPALASVDAGKIGIAVTTVDGETLGAGDYLEPFSIQSISKVFSLTLALTLYEEAEIWSRVGKEPSGHSFNSLVQVELERGKPRNPFINAGALVIADLLQSRLGAPKHRMLELVRQLSQNDKVCFDKQVADSEYQHSARNAAIAYLMKSFGNFQGDVDTVLRTYFHYCALKMNCADLSKAMLYLANRGKSITGTELISQVQTRQLNALLATSGLYDGAGEFAYRVGMPGKSGVGGGIIAVIPGELSICVWSPELDGNGNSLAGTAMLEHLSQRLGRSIF</sequence>
<organism>
    <name type="scientific">Shewanella baltica (strain OS155 / ATCC BAA-1091)</name>
    <dbReference type="NCBI Taxonomy" id="325240"/>
    <lineage>
        <taxon>Bacteria</taxon>
        <taxon>Pseudomonadati</taxon>
        <taxon>Pseudomonadota</taxon>
        <taxon>Gammaproteobacteria</taxon>
        <taxon>Alteromonadales</taxon>
        <taxon>Shewanellaceae</taxon>
        <taxon>Shewanella</taxon>
    </lineage>
</organism>
<accession>A3D705</accession>
<protein>
    <recommendedName>
        <fullName evidence="1">Glutaminase</fullName>
        <ecNumber evidence="1">3.5.1.2</ecNumber>
    </recommendedName>
</protein>